<gene>
    <name evidence="13" type="primary">PNPLA4</name>
    <name type="synonym">DXS1283E</name>
    <name evidence="10" type="synonym">GS2</name>
</gene>
<dbReference type="EC" id="3.1.1.3" evidence="2 4 5"/>
<dbReference type="EC" id="3.1.1.4" evidence="2"/>
<dbReference type="EMBL" id="U03886">
    <property type="protein sequence ID" value="AAA16491.1"/>
    <property type="molecule type" value="mRNA"/>
</dbReference>
<dbReference type="EMBL" id="U08893">
    <property type="protein sequence ID" value="AAA17838.1"/>
    <property type="molecule type" value="Genomic_DNA"/>
</dbReference>
<dbReference type="EMBL" id="U08888">
    <property type="protein sequence ID" value="AAA17838.1"/>
    <property type="status" value="JOINED"/>
    <property type="molecule type" value="Genomic_DNA"/>
</dbReference>
<dbReference type="EMBL" id="U08889">
    <property type="protein sequence ID" value="AAA17838.1"/>
    <property type="status" value="JOINED"/>
    <property type="molecule type" value="Genomic_DNA"/>
</dbReference>
<dbReference type="EMBL" id="U08890">
    <property type="protein sequence ID" value="AAA17838.1"/>
    <property type="status" value="JOINED"/>
    <property type="molecule type" value="Genomic_DNA"/>
</dbReference>
<dbReference type="EMBL" id="U08891">
    <property type="protein sequence ID" value="AAA17838.1"/>
    <property type="status" value="JOINED"/>
    <property type="molecule type" value="Genomic_DNA"/>
</dbReference>
<dbReference type="EMBL" id="U08892">
    <property type="protein sequence ID" value="AAA17838.1"/>
    <property type="status" value="JOINED"/>
    <property type="molecule type" value="Genomic_DNA"/>
</dbReference>
<dbReference type="EMBL" id="AK289888">
    <property type="protein sequence ID" value="BAF82577.1"/>
    <property type="molecule type" value="mRNA"/>
</dbReference>
<dbReference type="EMBL" id="AK304586">
    <property type="protein sequence ID" value="BAG65374.1"/>
    <property type="molecule type" value="mRNA"/>
</dbReference>
<dbReference type="EMBL" id="AC005296">
    <property type="status" value="NOT_ANNOTATED_CDS"/>
    <property type="molecule type" value="Genomic_DNA"/>
</dbReference>
<dbReference type="EMBL" id="CH471074">
    <property type="protein sequence ID" value="EAW98752.1"/>
    <property type="molecule type" value="Genomic_DNA"/>
</dbReference>
<dbReference type="EMBL" id="BC020746">
    <property type="protein sequence ID" value="AAH20746.1"/>
    <property type="molecule type" value="mRNA"/>
</dbReference>
<dbReference type="CCDS" id="CCDS14129.1">
    <molecule id="P41247-1"/>
</dbReference>
<dbReference type="CCDS" id="CCDS55368.1">
    <molecule id="P41247-2"/>
</dbReference>
<dbReference type="PIR" id="A55183">
    <property type="entry name" value="A55183"/>
</dbReference>
<dbReference type="RefSeq" id="NP_001135861.1">
    <molecule id="P41247-1"/>
    <property type="nucleotide sequence ID" value="NM_001142389.2"/>
</dbReference>
<dbReference type="RefSeq" id="NP_001166143.1">
    <molecule id="P41247-2"/>
    <property type="nucleotide sequence ID" value="NM_001172672.2"/>
</dbReference>
<dbReference type="RefSeq" id="NP_004641.1">
    <molecule id="P41247-1"/>
    <property type="nucleotide sequence ID" value="NM_004650.3"/>
</dbReference>
<dbReference type="RefSeq" id="XP_011543890.1">
    <property type="nucleotide sequence ID" value="XM_011545588.1"/>
</dbReference>
<dbReference type="SMR" id="P41247"/>
<dbReference type="BioGRID" id="113861">
    <property type="interactions" value="15"/>
</dbReference>
<dbReference type="FunCoup" id="P41247">
    <property type="interactions" value="374"/>
</dbReference>
<dbReference type="IntAct" id="P41247">
    <property type="interactions" value="11"/>
</dbReference>
<dbReference type="STRING" id="9606.ENSP00000370430"/>
<dbReference type="SwissLipids" id="SLP:000000312"/>
<dbReference type="GlyGen" id="P41247">
    <property type="glycosylation" value="1 site"/>
</dbReference>
<dbReference type="iPTMnet" id="P41247"/>
<dbReference type="PhosphoSitePlus" id="P41247"/>
<dbReference type="SwissPalm" id="P41247"/>
<dbReference type="BioMuta" id="PNPLA4"/>
<dbReference type="DMDM" id="116242718"/>
<dbReference type="jPOST" id="P41247"/>
<dbReference type="MassIVE" id="P41247"/>
<dbReference type="PaxDb" id="9606-ENSP00000370430"/>
<dbReference type="PeptideAtlas" id="P41247"/>
<dbReference type="ProteomicsDB" id="55451">
    <molecule id="P41247-1"/>
</dbReference>
<dbReference type="ProteomicsDB" id="55452">
    <molecule id="P41247-2"/>
</dbReference>
<dbReference type="Pumba" id="P41247"/>
<dbReference type="Antibodypedia" id="480">
    <property type="antibodies" value="91 antibodies from 19 providers"/>
</dbReference>
<dbReference type="DNASU" id="8228"/>
<dbReference type="Ensembl" id="ENST00000381042.9">
    <molecule id="P41247-1"/>
    <property type="protein sequence ID" value="ENSP00000370430.4"/>
    <property type="gene ID" value="ENSG00000006757.12"/>
</dbReference>
<dbReference type="Ensembl" id="ENST00000444736.5">
    <molecule id="P41247-1"/>
    <property type="protein sequence ID" value="ENSP00000415245.1"/>
    <property type="gene ID" value="ENSG00000006757.12"/>
</dbReference>
<dbReference type="Ensembl" id="ENST00000537427.5">
    <molecule id="P41247-2"/>
    <property type="protein sequence ID" value="ENSP00000443157.1"/>
    <property type="gene ID" value="ENSG00000006757.12"/>
</dbReference>
<dbReference type="GeneID" id="8228"/>
<dbReference type="KEGG" id="hsa:8228"/>
<dbReference type="MANE-Select" id="ENST00000381042.9">
    <property type="protein sequence ID" value="ENSP00000370430.4"/>
    <property type="RefSeq nucleotide sequence ID" value="NM_004650.3"/>
    <property type="RefSeq protein sequence ID" value="NP_004641.1"/>
</dbReference>
<dbReference type="UCSC" id="uc011mhq.2">
    <molecule id="P41247-1"/>
    <property type="organism name" value="human"/>
</dbReference>
<dbReference type="AGR" id="HGNC:24887"/>
<dbReference type="CTD" id="8228"/>
<dbReference type="DisGeNET" id="8228"/>
<dbReference type="GeneCards" id="PNPLA4"/>
<dbReference type="HGNC" id="HGNC:24887">
    <property type="gene designation" value="PNPLA4"/>
</dbReference>
<dbReference type="HPA" id="ENSG00000006757">
    <property type="expression patterns" value="Low tissue specificity"/>
</dbReference>
<dbReference type="MalaCards" id="PNPLA4"/>
<dbReference type="MIM" id="300102">
    <property type="type" value="gene"/>
</dbReference>
<dbReference type="neXtProt" id="NX_P41247"/>
<dbReference type="OpenTargets" id="ENSG00000006757"/>
<dbReference type="PharmGKB" id="PA134910531"/>
<dbReference type="VEuPathDB" id="HostDB:ENSG00000006757"/>
<dbReference type="eggNOG" id="KOG3773">
    <property type="taxonomic scope" value="Eukaryota"/>
</dbReference>
<dbReference type="GeneTree" id="ENSGT00940000162022"/>
<dbReference type="HOGENOM" id="CLU_018371_4_0_1"/>
<dbReference type="InParanoid" id="P41247"/>
<dbReference type="OMA" id="KGEKWID"/>
<dbReference type="OrthoDB" id="197155at2759"/>
<dbReference type="PAN-GO" id="P41247">
    <property type="GO annotations" value="6 GO annotations based on evolutionary models"/>
</dbReference>
<dbReference type="PhylomeDB" id="P41247"/>
<dbReference type="TreeFam" id="TF314272"/>
<dbReference type="PathwayCommons" id="P41247"/>
<dbReference type="Reactome" id="R-HSA-163560">
    <property type="pathway name" value="Triglyceride catabolism"/>
</dbReference>
<dbReference type="SignaLink" id="P41247"/>
<dbReference type="BioGRID-ORCS" id="8228">
    <property type="hits" value="9 hits in 781 CRISPR screens"/>
</dbReference>
<dbReference type="GenomeRNAi" id="8228"/>
<dbReference type="Pharos" id="P41247">
    <property type="development level" value="Tbio"/>
</dbReference>
<dbReference type="PRO" id="PR:P41247"/>
<dbReference type="Proteomes" id="UP000005640">
    <property type="component" value="Chromosome X"/>
</dbReference>
<dbReference type="RNAct" id="P41247">
    <property type="molecule type" value="protein"/>
</dbReference>
<dbReference type="Bgee" id="ENSG00000006757">
    <property type="expression patterns" value="Expressed in oocyte and 196 other cell types or tissues"/>
</dbReference>
<dbReference type="ExpressionAtlas" id="P41247">
    <property type="expression patterns" value="baseline and differential"/>
</dbReference>
<dbReference type="GO" id="GO:0005737">
    <property type="term" value="C:cytoplasm"/>
    <property type="evidence" value="ECO:0000318"/>
    <property type="project" value="GO_Central"/>
</dbReference>
<dbReference type="GO" id="GO:0005829">
    <property type="term" value="C:cytosol"/>
    <property type="evidence" value="ECO:0000304"/>
    <property type="project" value="Reactome"/>
</dbReference>
<dbReference type="GO" id="GO:0005811">
    <property type="term" value="C:lipid droplet"/>
    <property type="evidence" value="ECO:0000318"/>
    <property type="project" value="GO_Central"/>
</dbReference>
<dbReference type="GO" id="GO:0016020">
    <property type="term" value="C:membrane"/>
    <property type="evidence" value="ECO:0000318"/>
    <property type="project" value="GO_Central"/>
</dbReference>
<dbReference type="GO" id="GO:0005739">
    <property type="term" value="C:mitochondrion"/>
    <property type="evidence" value="ECO:0000314"/>
    <property type="project" value="UniProtKB"/>
</dbReference>
<dbReference type="GO" id="GO:0016411">
    <property type="term" value="F:acylglycerol O-acyltransferase activity"/>
    <property type="evidence" value="ECO:0000314"/>
    <property type="project" value="UniProtKB"/>
</dbReference>
<dbReference type="GO" id="GO:0047376">
    <property type="term" value="F:all-trans-retinyl-palmitate hydrolase, all-trans-retinol forming activity"/>
    <property type="evidence" value="ECO:0007669"/>
    <property type="project" value="RHEA"/>
</dbReference>
<dbReference type="GO" id="GO:0051265">
    <property type="term" value="F:diolein transacylation activity"/>
    <property type="evidence" value="ECO:0000314"/>
    <property type="project" value="UniProtKB"/>
</dbReference>
<dbReference type="GO" id="GO:0051264">
    <property type="term" value="F:mono-olein transacylation activity"/>
    <property type="evidence" value="ECO:0000314"/>
    <property type="project" value="UniProtKB"/>
</dbReference>
<dbReference type="GO" id="GO:0004623">
    <property type="term" value="F:phospholipase A2 activity"/>
    <property type="evidence" value="ECO:0000314"/>
    <property type="project" value="UniProtKB"/>
</dbReference>
<dbReference type="GO" id="GO:0050253">
    <property type="term" value="F:retinyl-palmitate esterase activity"/>
    <property type="evidence" value="ECO:0000269"/>
    <property type="project" value="Reactome"/>
</dbReference>
<dbReference type="GO" id="GO:0004806">
    <property type="term" value="F:triacylglycerol lipase activity"/>
    <property type="evidence" value="ECO:0000314"/>
    <property type="project" value="UniProtKB"/>
</dbReference>
<dbReference type="GO" id="GO:0055088">
    <property type="term" value="P:lipid homeostasis"/>
    <property type="evidence" value="ECO:0000318"/>
    <property type="project" value="GO_Central"/>
</dbReference>
<dbReference type="GO" id="GO:0019433">
    <property type="term" value="P:triglyceride catabolic process"/>
    <property type="evidence" value="ECO:0000318"/>
    <property type="project" value="GO_Central"/>
</dbReference>
<dbReference type="CDD" id="cd07222">
    <property type="entry name" value="Pat_PNPLA4"/>
    <property type="match status" value="1"/>
</dbReference>
<dbReference type="FunFam" id="3.40.1090.10:FF:000057">
    <property type="entry name" value="Patatin-like phospholipase domain containing 4, isoform CRA_b"/>
    <property type="match status" value="1"/>
</dbReference>
<dbReference type="Gene3D" id="3.40.1090.10">
    <property type="entry name" value="Cytosolic phospholipase A2 catalytic domain"/>
    <property type="match status" value="1"/>
</dbReference>
<dbReference type="InterPro" id="IPR016035">
    <property type="entry name" value="Acyl_Trfase/lysoPLipase"/>
</dbReference>
<dbReference type="InterPro" id="IPR033562">
    <property type="entry name" value="PLPL"/>
</dbReference>
<dbReference type="InterPro" id="IPR033902">
    <property type="entry name" value="PNPLA4"/>
</dbReference>
<dbReference type="InterPro" id="IPR002641">
    <property type="entry name" value="PNPLA_dom"/>
</dbReference>
<dbReference type="PANTHER" id="PTHR12406">
    <property type="entry name" value="CALCIUM-INDEPENDENT PHOSPHOLIPASE A2 IPLA2 -RELATED"/>
    <property type="match status" value="1"/>
</dbReference>
<dbReference type="PANTHER" id="PTHR12406:SF7">
    <property type="entry name" value="PATATIN-LIKE PHOSPHOLIPASE DOMAIN-CONTAINING PROTEIN 4"/>
    <property type="match status" value="1"/>
</dbReference>
<dbReference type="Pfam" id="PF01734">
    <property type="entry name" value="Patatin"/>
    <property type="match status" value="1"/>
</dbReference>
<dbReference type="SUPFAM" id="SSF52151">
    <property type="entry name" value="FabD/lysophospholipase-like"/>
    <property type="match status" value="1"/>
</dbReference>
<dbReference type="PROSITE" id="PS51635">
    <property type="entry name" value="PNPLA"/>
    <property type="match status" value="1"/>
</dbReference>
<evidence type="ECO:0000255" key="1">
    <source>
        <dbReference type="PROSITE-ProRule" id="PRU01161"/>
    </source>
</evidence>
<evidence type="ECO:0000269" key="2">
    <source>
    </source>
</evidence>
<evidence type="ECO:0000269" key="3">
    <source>
    </source>
</evidence>
<evidence type="ECO:0000269" key="4">
    <source>
    </source>
</evidence>
<evidence type="ECO:0000269" key="5">
    <source>
    </source>
</evidence>
<evidence type="ECO:0000269" key="6">
    <source>
    </source>
</evidence>
<evidence type="ECO:0000269" key="7">
    <source>
    </source>
</evidence>
<evidence type="ECO:0000303" key="8">
    <source>
    </source>
</evidence>
<evidence type="ECO:0000303" key="9">
    <source>
    </source>
</evidence>
<evidence type="ECO:0000303" key="10">
    <source>
    </source>
</evidence>
<evidence type="ECO:0000305" key="11">
    <source>
    </source>
</evidence>
<evidence type="ECO:0000305" key="12">
    <source>
    </source>
</evidence>
<evidence type="ECO:0000312" key="13">
    <source>
        <dbReference type="HGNC" id="HGNC:24887"/>
    </source>
</evidence>
<name>PLPL4_HUMAN</name>
<organism>
    <name type="scientific">Homo sapiens</name>
    <name type="common">Human</name>
    <dbReference type="NCBI Taxonomy" id="9606"/>
    <lineage>
        <taxon>Eukaryota</taxon>
        <taxon>Metazoa</taxon>
        <taxon>Chordata</taxon>
        <taxon>Craniata</taxon>
        <taxon>Vertebrata</taxon>
        <taxon>Euteleostomi</taxon>
        <taxon>Mammalia</taxon>
        <taxon>Eutheria</taxon>
        <taxon>Euarchontoglires</taxon>
        <taxon>Primates</taxon>
        <taxon>Haplorrhini</taxon>
        <taxon>Catarrhini</taxon>
        <taxon>Hominidae</taxon>
        <taxon>Homo</taxon>
    </lineage>
</organism>
<protein>
    <recommendedName>
        <fullName>Patatin-like phospholipase domain-containing protein 4</fullName>
        <ecNumber evidence="2 4 5">3.1.1.3</ecNumber>
    </recommendedName>
    <alternativeName>
        <fullName evidence="9">Calcium-independent phospholipase A2-eta</fullName>
        <shortName evidence="9">iPLA2-eta</shortName>
        <ecNumber evidence="2">3.1.1.4</ecNumber>
    </alternativeName>
    <alternativeName>
        <fullName evidence="10">Protein GS2</fullName>
    </alternativeName>
</protein>
<reference key="1">
    <citation type="journal article" date="1994" name="Genomics">
        <title>Isolation of a new gene GS2 (DXS1283E) from a CpG island between STS and KAL1 on Xp22.3.</title>
        <authorList>
            <person name="Lee W.-C."/>
            <person name="Salido E."/>
            <person name="Yen P.H."/>
        </authorList>
    </citation>
    <scope>NUCLEOTIDE SEQUENCE [GENOMIC DNA / MRNA] (ISOFORM 1)</scope>
    <scope>TISSUE SPECIFICITY</scope>
    <source>
        <tissue>Brain</tissue>
    </source>
</reference>
<reference key="2">
    <citation type="journal article" date="2004" name="Nat. Genet.">
        <title>Complete sequencing and characterization of 21,243 full-length human cDNAs.</title>
        <authorList>
            <person name="Ota T."/>
            <person name="Suzuki Y."/>
            <person name="Nishikawa T."/>
            <person name="Otsuki T."/>
            <person name="Sugiyama T."/>
            <person name="Irie R."/>
            <person name="Wakamatsu A."/>
            <person name="Hayashi K."/>
            <person name="Sato H."/>
            <person name="Nagai K."/>
            <person name="Kimura K."/>
            <person name="Makita H."/>
            <person name="Sekine M."/>
            <person name="Obayashi M."/>
            <person name="Nishi T."/>
            <person name="Shibahara T."/>
            <person name="Tanaka T."/>
            <person name="Ishii S."/>
            <person name="Yamamoto J."/>
            <person name="Saito K."/>
            <person name="Kawai Y."/>
            <person name="Isono Y."/>
            <person name="Nakamura Y."/>
            <person name="Nagahari K."/>
            <person name="Murakami K."/>
            <person name="Yasuda T."/>
            <person name="Iwayanagi T."/>
            <person name="Wagatsuma M."/>
            <person name="Shiratori A."/>
            <person name="Sudo H."/>
            <person name="Hosoiri T."/>
            <person name="Kaku Y."/>
            <person name="Kodaira H."/>
            <person name="Kondo H."/>
            <person name="Sugawara M."/>
            <person name="Takahashi M."/>
            <person name="Kanda K."/>
            <person name="Yokoi T."/>
            <person name="Furuya T."/>
            <person name="Kikkawa E."/>
            <person name="Omura Y."/>
            <person name="Abe K."/>
            <person name="Kamihara K."/>
            <person name="Katsuta N."/>
            <person name="Sato K."/>
            <person name="Tanikawa M."/>
            <person name="Yamazaki M."/>
            <person name="Ninomiya K."/>
            <person name="Ishibashi T."/>
            <person name="Yamashita H."/>
            <person name="Murakawa K."/>
            <person name="Fujimori K."/>
            <person name="Tanai H."/>
            <person name="Kimata M."/>
            <person name="Watanabe M."/>
            <person name="Hiraoka S."/>
            <person name="Chiba Y."/>
            <person name="Ishida S."/>
            <person name="Ono Y."/>
            <person name="Takiguchi S."/>
            <person name="Watanabe S."/>
            <person name="Yosida M."/>
            <person name="Hotuta T."/>
            <person name="Kusano J."/>
            <person name="Kanehori K."/>
            <person name="Takahashi-Fujii A."/>
            <person name="Hara H."/>
            <person name="Tanase T.-O."/>
            <person name="Nomura Y."/>
            <person name="Togiya S."/>
            <person name="Komai F."/>
            <person name="Hara R."/>
            <person name="Takeuchi K."/>
            <person name="Arita M."/>
            <person name="Imose N."/>
            <person name="Musashino K."/>
            <person name="Yuuki H."/>
            <person name="Oshima A."/>
            <person name="Sasaki N."/>
            <person name="Aotsuka S."/>
            <person name="Yoshikawa Y."/>
            <person name="Matsunawa H."/>
            <person name="Ichihara T."/>
            <person name="Shiohata N."/>
            <person name="Sano S."/>
            <person name="Moriya S."/>
            <person name="Momiyama H."/>
            <person name="Satoh N."/>
            <person name="Takami S."/>
            <person name="Terashima Y."/>
            <person name="Suzuki O."/>
            <person name="Nakagawa S."/>
            <person name="Senoh A."/>
            <person name="Mizoguchi H."/>
            <person name="Goto Y."/>
            <person name="Shimizu F."/>
            <person name="Wakebe H."/>
            <person name="Hishigaki H."/>
            <person name="Watanabe T."/>
            <person name="Sugiyama A."/>
            <person name="Takemoto M."/>
            <person name="Kawakami B."/>
            <person name="Yamazaki M."/>
            <person name="Watanabe K."/>
            <person name="Kumagai A."/>
            <person name="Itakura S."/>
            <person name="Fukuzumi Y."/>
            <person name="Fujimori Y."/>
            <person name="Komiyama M."/>
            <person name="Tashiro H."/>
            <person name="Tanigami A."/>
            <person name="Fujiwara T."/>
            <person name="Ono T."/>
            <person name="Yamada K."/>
            <person name="Fujii Y."/>
            <person name="Ozaki K."/>
            <person name="Hirao M."/>
            <person name="Ohmori Y."/>
            <person name="Kawabata A."/>
            <person name="Hikiji T."/>
            <person name="Kobatake N."/>
            <person name="Inagaki H."/>
            <person name="Ikema Y."/>
            <person name="Okamoto S."/>
            <person name="Okitani R."/>
            <person name="Kawakami T."/>
            <person name="Noguchi S."/>
            <person name="Itoh T."/>
            <person name="Shigeta K."/>
            <person name="Senba T."/>
            <person name="Matsumura K."/>
            <person name="Nakajima Y."/>
            <person name="Mizuno T."/>
            <person name="Morinaga M."/>
            <person name="Sasaki M."/>
            <person name="Togashi T."/>
            <person name="Oyama M."/>
            <person name="Hata H."/>
            <person name="Watanabe M."/>
            <person name="Komatsu T."/>
            <person name="Mizushima-Sugano J."/>
            <person name="Satoh T."/>
            <person name="Shirai Y."/>
            <person name="Takahashi Y."/>
            <person name="Nakagawa K."/>
            <person name="Okumura K."/>
            <person name="Nagase T."/>
            <person name="Nomura N."/>
            <person name="Kikuchi H."/>
            <person name="Masuho Y."/>
            <person name="Yamashita R."/>
            <person name="Nakai K."/>
            <person name="Yada T."/>
            <person name="Nakamura Y."/>
            <person name="Ohara O."/>
            <person name="Isogai T."/>
            <person name="Sugano S."/>
        </authorList>
    </citation>
    <scope>NUCLEOTIDE SEQUENCE [LARGE SCALE MRNA] (ISOFORMS 1 AND 2)</scope>
    <source>
        <tissue>Corpus callosum</tissue>
        <tissue>Uterus</tissue>
    </source>
</reference>
<reference key="3">
    <citation type="journal article" date="2005" name="Nature">
        <title>The DNA sequence of the human X chromosome.</title>
        <authorList>
            <person name="Ross M.T."/>
            <person name="Grafham D.V."/>
            <person name="Coffey A.J."/>
            <person name="Scherer S."/>
            <person name="McLay K."/>
            <person name="Muzny D."/>
            <person name="Platzer M."/>
            <person name="Howell G.R."/>
            <person name="Burrows C."/>
            <person name="Bird C.P."/>
            <person name="Frankish A."/>
            <person name="Lovell F.L."/>
            <person name="Howe K.L."/>
            <person name="Ashurst J.L."/>
            <person name="Fulton R.S."/>
            <person name="Sudbrak R."/>
            <person name="Wen G."/>
            <person name="Jones M.C."/>
            <person name="Hurles M.E."/>
            <person name="Andrews T.D."/>
            <person name="Scott C.E."/>
            <person name="Searle S."/>
            <person name="Ramser J."/>
            <person name="Whittaker A."/>
            <person name="Deadman R."/>
            <person name="Carter N.P."/>
            <person name="Hunt S.E."/>
            <person name="Chen R."/>
            <person name="Cree A."/>
            <person name="Gunaratne P."/>
            <person name="Havlak P."/>
            <person name="Hodgson A."/>
            <person name="Metzker M.L."/>
            <person name="Richards S."/>
            <person name="Scott G."/>
            <person name="Steffen D."/>
            <person name="Sodergren E."/>
            <person name="Wheeler D.A."/>
            <person name="Worley K.C."/>
            <person name="Ainscough R."/>
            <person name="Ambrose K.D."/>
            <person name="Ansari-Lari M.A."/>
            <person name="Aradhya S."/>
            <person name="Ashwell R.I."/>
            <person name="Babbage A.K."/>
            <person name="Bagguley C.L."/>
            <person name="Ballabio A."/>
            <person name="Banerjee R."/>
            <person name="Barker G.E."/>
            <person name="Barlow K.F."/>
            <person name="Barrett I.P."/>
            <person name="Bates K.N."/>
            <person name="Beare D.M."/>
            <person name="Beasley H."/>
            <person name="Beasley O."/>
            <person name="Beck A."/>
            <person name="Bethel G."/>
            <person name="Blechschmidt K."/>
            <person name="Brady N."/>
            <person name="Bray-Allen S."/>
            <person name="Bridgeman A.M."/>
            <person name="Brown A.J."/>
            <person name="Brown M.J."/>
            <person name="Bonnin D."/>
            <person name="Bruford E.A."/>
            <person name="Buhay C."/>
            <person name="Burch P."/>
            <person name="Burford D."/>
            <person name="Burgess J."/>
            <person name="Burrill W."/>
            <person name="Burton J."/>
            <person name="Bye J.M."/>
            <person name="Carder C."/>
            <person name="Carrel L."/>
            <person name="Chako J."/>
            <person name="Chapman J.C."/>
            <person name="Chavez D."/>
            <person name="Chen E."/>
            <person name="Chen G."/>
            <person name="Chen Y."/>
            <person name="Chen Z."/>
            <person name="Chinault C."/>
            <person name="Ciccodicola A."/>
            <person name="Clark S.Y."/>
            <person name="Clarke G."/>
            <person name="Clee C.M."/>
            <person name="Clegg S."/>
            <person name="Clerc-Blankenburg K."/>
            <person name="Clifford K."/>
            <person name="Cobley V."/>
            <person name="Cole C.G."/>
            <person name="Conquer J.S."/>
            <person name="Corby N."/>
            <person name="Connor R.E."/>
            <person name="David R."/>
            <person name="Davies J."/>
            <person name="Davis C."/>
            <person name="Davis J."/>
            <person name="Delgado O."/>
            <person name="Deshazo D."/>
            <person name="Dhami P."/>
            <person name="Ding Y."/>
            <person name="Dinh H."/>
            <person name="Dodsworth S."/>
            <person name="Draper H."/>
            <person name="Dugan-Rocha S."/>
            <person name="Dunham A."/>
            <person name="Dunn M."/>
            <person name="Durbin K.J."/>
            <person name="Dutta I."/>
            <person name="Eades T."/>
            <person name="Ellwood M."/>
            <person name="Emery-Cohen A."/>
            <person name="Errington H."/>
            <person name="Evans K.L."/>
            <person name="Faulkner L."/>
            <person name="Francis F."/>
            <person name="Frankland J."/>
            <person name="Fraser A.E."/>
            <person name="Galgoczy P."/>
            <person name="Gilbert J."/>
            <person name="Gill R."/>
            <person name="Gloeckner G."/>
            <person name="Gregory S.G."/>
            <person name="Gribble S."/>
            <person name="Griffiths C."/>
            <person name="Grocock R."/>
            <person name="Gu Y."/>
            <person name="Gwilliam R."/>
            <person name="Hamilton C."/>
            <person name="Hart E.A."/>
            <person name="Hawes A."/>
            <person name="Heath P.D."/>
            <person name="Heitmann K."/>
            <person name="Hennig S."/>
            <person name="Hernandez J."/>
            <person name="Hinzmann B."/>
            <person name="Ho S."/>
            <person name="Hoffs M."/>
            <person name="Howden P.J."/>
            <person name="Huckle E.J."/>
            <person name="Hume J."/>
            <person name="Hunt P.J."/>
            <person name="Hunt A.R."/>
            <person name="Isherwood J."/>
            <person name="Jacob L."/>
            <person name="Johnson D."/>
            <person name="Jones S."/>
            <person name="de Jong P.J."/>
            <person name="Joseph S.S."/>
            <person name="Keenan S."/>
            <person name="Kelly S."/>
            <person name="Kershaw J.K."/>
            <person name="Khan Z."/>
            <person name="Kioschis P."/>
            <person name="Klages S."/>
            <person name="Knights A.J."/>
            <person name="Kosiura A."/>
            <person name="Kovar-Smith C."/>
            <person name="Laird G.K."/>
            <person name="Langford C."/>
            <person name="Lawlor S."/>
            <person name="Leversha M."/>
            <person name="Lewis L."/>
            <person name="Liu W."/>
            <person name="Lloyd C."/>
            <person name="Lloyd D.M."/>
            <person name="Loulseged H."/>
            <person name="Loveland J.E."/>
            <person name="Lovell J.D."/>
            <person name="Lozado R."/>
            <person name="Lu J."/>
            <person name="Lyne R."/>
            <person name="Ma J."/>
            <person name="Maheshwari M."/>
            <person name="Matthews L.H."/>
            <person name="McDowall J."/>
            <person name="McLaren S."/>
            <person name="McMurray A."/>
            <person name="Meidl P."/>
            <person name="Meitinger T."/>
            <person name="Milne S."/>
            <person name="Miner G."/>
            <person name="Mistry S.L."/>
            <person name="Morgan M."/>
            <person name="Morris S."/>
            <person name="Mueller I."/>
            <person name="Mullikin J.C."/>
            <person name="Nguyen N."/>
            <person name="Nordsiek G."/>
            <person name="Nyakatura G."/>
            <person name="O'dell C.N."/>
            <person name="Okwuonu G."/>
            <person name="Palmer S."/>
            <person name="Pandian R."/>
            <person name="Parker D."/>
            <person name="Parrish J."/>
            <person name="Pasternak S."/>
            <person name="Patel D."/>
            <person name="Pearce A.V."/>
            <person name="Pearson D.M."/>
            <person name="Pelan S.E."/>
            <person name="Perez L."/>
            <person name="Porter K.M."/>
            <person name="Ramsey Y."/>
            <person name="Reichwald K."/>
            <person name="Rhodes S."/>
            <person name="Ridler K.A."/>
            <person name="Schlessinger D."/>
            <person name="Schueler M.G."/>
            <person name="Sehra H.K."/>
            <person name="Shaw-Smith C."/>
            <person name="Shen H."/>
            <person name="Sheridan E.M."/>
            <person name="Shownkeen R."/>
            <person name="Skuce C.D."/>
            <person name="Smith M.L."/>
            <person name="Sotheran E.C."/>
            <person name="Steingruber H.E."/>
            <person name="Steward C.A."/>
            <person name="Storey R."/>
            <person name="Swann R.M."/>
            <person name="Swarbreck D."/>
            <person name="Tabor P.E."/>
            <person name="Taudien S."/>
            <person name="Taylor T."/>
            <person name="Teague B."/>
            <person name="Thomas K."/>
            <person name="Thorpe A."/>
            <person name="Timms K."/>
            <person name="Tracey A."/>
            <person name="Trevanion S."/>
            <person name="Tromans A.C."/>
            <person name="d'Urso M."/>
            <person name="Verduzco D."/>
            <person name="Villasana D."/>
            <person name="Waldron L."/>
            <person name="Wall M."/>
            <person name="Wang Q."/>
            <person name="Warren J."/>
            <person name="Warry G.L."/>
            <person name="Wei X."/>
            <person name="West A."/>
            <person name="Whitehead S.L."/>
            <person name="Whiteley M.N."/>
            <person name="Wilkinson J.E."/>
            <person name="Willey D.L."/>
            <person name="Williams G."/>
            <person name="Williams L."/>
            <person name="Williamson A."/>
            <person name="Williamson H."/>
            <person name="Wilming L."/>
            <person name="Woodmansey R.L."/>
            <person name="Wray P.W."/>
            <person name="Yen J."/>
            <person name="Zhang J."/>
            <person name="Zhou J."/>
            <person name="Zoghbi H."/>
            <person name="Zorilla S."/>
            <person name="Buck D."/>
            <person name="Reinhardt R."/>
            <person name="Poustka A."/>
            <person name="Rosenthal A."/>
            <person name="Lehrach H."/>
            <person name="Meindl A."/>
            <person name="Minx P.J."/>
            <person name="Hillier L.W."/>
            <person name="Willard H.F."/>
            <person name="Wilson R.K."/>
            <person name="Waterston R.H."/>
            <person name="Rice C.M."/>
            <person name="Vaudin M."/>
            <person name="Coulson A."/>
            <person name="Nelson D.L."/>
            <person name="Weinstock G."/>
            <person name="Sulston J.E."/>
            <person name="Durbin R.M."/>
            <person name="Hubbard T."/>
            <person name="Gibbs R.A."/>
            <person name="Beck S."/>
            <person name="Rogers J."/>
            <person name="Bentley D.R."/>
        </authorList>
    </citation>
    <scope>NUCLEOTIDE SEQUENCE [LARGE SCALE GENOMIC DNA]</scope>
</reference>
<reference key="4">
    <citation type="submission" date="2005-07" db="EMBL/GenBank/DDBJ databases">
        <authorList>
            <person name="Mural R.J."/>
            <person name="Istrail S."/>
            <person name="Sutton G.G."/>
            <person name="Florea L."/>
            <person name="Halpern A.L."/>
            <person name="Mobarry C.M."/>
            <person name="Lippert R."/>
            <person name="Walenz B."/>
            <person name="Shatkay H."/>
            <person name="Dew I."/>
            <person name="Miller J.R."/>
            <person name="Flanigan M.J."/>
            <person name="Edwards N.J."/>
            <person name="Bolanos R."/>
            <person name="Fasulo D."/>
            <person name="Halldorsson B.V."/>
            <person name="Hannenhalli S."/>
            <person name="Turner R."/>
            <person name="Yooseph S."/>
            <person name="Lu F."/>
            <person name="Nusskern D.R."/>
            <person name="Shue B.C."/>
            <person name="Zheng X.H."/>
            <person name="Zhong F."/>
            <person name="Delcher A.L."/>
            <person name="Huson D.H."/>
            <person name="Kravitz S.A."/>
            <person name="Mouchard L."/>
            <person name="Reinert K."/>
            <person name="Remington K.A."/>
            <person name="Clark A.G."/>
            <person name="Waterman M.S."/>
            <person name="Eichler E.E."/>
            <person name="Adams M.D."/>
            <person name="Hunkapiller M.W."/>
            <person name="Myers E.W."/>
            <person name="Venter J.C."/>
        </authorList>
    </citation>
    <scope>NUCLEOTIDE SEQUENCE [LARGE SCALE GENOMIC DNA]</scope>
</reference>
<reference key="5">
    <citation type="journal article" date="2004" name="Genome Res.">
        <title>The status, quality, and expansion of the NIH full-length cDNA project: the Mammalian Gene Collection (MGC).</title>
        <authorList>
            <consortium name="The MGC Project Team"/>
        </authorList>
    </citation>
    <scope>NUCLEOTIDE SEQUENCE [LARGE SCALE MRNA] (ISOFORM 1)</scope>
    <scope>VARIANTS GLY-48 AND GLY-134</scope>
    <source>
        <tissue>Lung</tissue>
    </source>
</reference>
<reference key="6">
    <citation type="journal article" date="2004" name="J. Biol. Chem.">
        <title>Identification, cloning, expression, and purification of three novel human calcium-independent phospholipase A2 family members possessing triacylglycerol lipase and acylglycerol transacylase activities.</title>
        <authorList>
            <person name="Jenkins C.M."/>
            <person name="Mancuso D.J."/>
            <person name="Yan W."/>
            <person name="Sims H.F."/>
            <person name="Gibson B."/>
            <person name="Gross R.W."/>
        </authorList>
    </citation>
    <scope>FUNCTION</scope>
    <scope>CATALYTIC ACTIVITY</scope>
    <scope>ACTIVITY REGULATION</scope>
</reference>
<reference key="7">
    <citation type="journal article" date="2005" name="J. Lipid Res.">
        <title>Expression, regulation, and triglyceride hydrolase activity of Adiponutrin family members.</title>
        <authorList>
            <person name="Lake A.C."/>
            <person name="Sun Y."/>
            <person name="Li J.-L."/>
            <person name="Kim J.E."/>
            <person name="Johnson J.W."/>
            <person name="Li D."/>
            <person name="Revett T."/>
            <person name="Shih H.H."/>
            <person name="Liu W."/>
            <person name="Paulsen J.E."/>
            <person name="Gimeno R.E."/>
        </authorList>
    </citation>
    <scope>CATALYTIC ACTIVITY</scope>
    <scope>FUNCTION</scope>
</reference>
<reference key="8">
    <citation type="journal article" date="2007" name="Biochem. Biophys. Res. Commun.">
        <title>A comparative study of human GS2, its paralogues, and its rat orthologue.</title>
        <authorList>
            <person name="Gao J.G."/>
            <person name="Simon M."/>
        </authorList>
    </citation>
    <scope>CATALYTIC ACTIVITY</scope>
    <scope>FUNCTION</scope>
</reference>
<reference key="9">
    <citation type="journal article" date="2016" name="PLoS Genet.">
        <title>A comprehensive genomic analysis reveals the genetic landscape of mitochondrial respiratory chain complex deficiencies.</title>
        <authorList>
            <person name="Kohda M."/>
            <person name="Tokuzawa Y."/>
            <person name="Kishita Y."/>
            <person name="Nyuzuki H."/>
            <person name="Moriyama Y."/>
            <person name="Mizuno Y."/>
            <person name="Hirata T."/>
            <person name="Yatsuka Y."/>
            <person name="Yamashita-Sugahara Y."/>
            <person name="Nakachi Y."/>
            <person name="Kato H."/>
            <person name="Okuda A."/>
            <person name="Tamaru S."/>
            <person name="Borna N.N."/>
            <person name="Banshoya K."/>
            <person name="Aigaki T."/>
            <person name="Sato-Miyata Y."/>
            <person name="Ohnuma K."/>
            <person name="Suzuki T."/>
            <person name="Nagao A."/>
            <person name="Maehata H."/>
            <person name="Matsuda F."/>
            <person name="Higasa K."/>
            <person name="Nagasaki M."/>
            <person name="Yasuda J."/>
            <person name="Yamamoto M."/>
            <person name="Fushimi T."/>
            <person name="Shimura M."/>
            <person name="Kaiho-Ichimoto K."/>
            <person name="Harashima H."/>
            <person name="Yamazaki T."/>
            <person name="Mori M."/>
            <person name="Murayama K."/>
            <person name="Ohtake A."/>
            <person name="Okazaki Y."/>
        </authorList>
    </citation>
    <scope>SUBCELLULAR LOCATION</scope>
    <scope>POSSIBLE INVOLVEMENT IN MITOCHONDRIAL DISORDERS</scope>
</reference>
<proteinExistence type="evidence at protein level"/>
<comment type="function">
    <text evidence="2 4 5">Has abundant triacylglycerol lipase activity (PubMed:15364929, PubMed:16150821, PubMed:17603008). Transfers fatty acid from triglyceride to retinol, hydrolyzes retinylesters, and generates 1,3-diacylglycerol from triglycerides (PubMed:17603008). Additionally possesses acylglycerol transacylase and phospholipase A2 activities (PubMed:15364929, PubMed:17603008).</text>
</comment>
<comment type="catalytic activity">
    <reaction evidence="2 4 5">
        <text>a triacylglycerol + H2O = a diacylglycerol + a fatty acid + H(+)</text>
        <dbReference type="Rhea" id="RHEA:12044"/>
        <dbReference type="ChEBI" id="CHEBI:15377"/>
        <dbReference type="ChEBI" id="CHEBI:15378"/>
        <dbReference type="ChEBI" id="CHEBI:17855"/>
        <dbReference type="ChEBI" id="CHEBI:18035"/>
        <dbReference type="ChEBI" id="CHEBI:28868"/>
        <dbReference type="EC" id="3.1.1.3"/>
    </reaction>
    <physiologicalReaction direction="left-to-right" evidence="4 11">
        <dbReference type="Rhea" id="RHEA:12045"/>
    </physiologicalReaction>
</comment>
<comment type="catalytic activity">
    <reaction evidence="2">
        <text>a 1,2-diacyl-sn-glycero-3-phosphocholine + H2O = a 1-acyl-sn-glycero-3-phosphocholine + a fatty acid + H(+)</text>
        <dbReference type="Rhea" id="RHEA:15801"/>
        <dbReference type="ChEBI" id="CHEBI:15377"/>
        <dbReference type="ChEBI" id="CHEBI:15378"/>
        <dbReference type="ChEBI" id="CHEBI:28868"/>
        <dbReference type="ChEBI" id="CHEBI:57643"/>
        <dbReference type="ChEBI" id="CHEBI:58168"/>
        <dbReference type="EC" id="3.1.1.4"/>
    </reaction>
    <physiologicalReaction direction="left-to-right" evidence="11">
        <dbReference type="Rhea" id="RHEA:15802"/>
    </physiologicalReaction>
</comment>
<comment type="catalytic activity">
    <reaction evidence="5">
        <text>an all-trans-retinyl ester + H2O = all-trans-retinol + a fatty acid + H(+)</text>
        <dbReference type="Rhea" id="RHEA:38555"/>
        <dbReference type="ChEBI" id="CHEBI:15377"/>
        <dbReference type="ChEBI" id="CHEBI:15378"/>
        <dbReference type="ChEBI" id="CHEBI:17336"/>
        <dbReference type="ChEBI" id="CHEBI:28868"/>
        <dbReference type="ChEBI" id="CHEBI:63410"/>
    </reaction>
    <physiologicalReaction direction="left-to-right" evidence="12">
        <dbReference type="Rhea" id="RHEA:38556"/>
    </physiologicalReaction>
</comment>
<comment type="catalytic activity">
    <reaction evidence="2">
        <text>2 a 1-acylglycerol = a 1,2-diacylglycerol + glycerol</text>
        <dbReference type="Rhea" id="RHEA:44432"/>
        <dbReference type="ChEBI" id="CHEBI:17754"/>
        <dbReference type="ChEBI" id="CHEBI:35759"/>
        <dbReference type="ChEBI" id="CHEBI:49172"/>
    </reaction>
    <physiologicalReaction direction="left-to-right" evidence="11">
        <dbReference type="Rhea" id="RHEA:44433"/>
    </physiologicalReaction>
</comment>
<comment type="catalytic activity">
    <reaction evidence="2">
        <text>a 1-acylglycerol + a 1,2-diacylglycerol = a triacylglycerol + glycerol</text>
        <dbReference type="Rhea" id="RHEA:44436"/>
        <dbReference type="ChEBI" id="CHEBI:17754"/>
        <dbReference type="ChEBI" id="CHEBI:17855"/>
        <dbReference type="ChEBI" id="CHEBI:35759"/>
        <dbReference type="ChEBI" id="CHEBI:49172"/>
    </reaction>
    <physiologicalReaction direction="left-to-right" evidence="11">
        <dbReference type="Rhea" id="RHEA:44437"/>
    </physiologicalReaction>
</comment>
<comment type="catalytic activity">
    <reaction evidence="2">
        <text>a 1-acylglycerol + a 1,3-diacylglycerol = a triacylglycerol + glycerol</text>
        <dbReference type="Rhea" id="RHEA:44440"/>
        <dbReference type="ChEBI" id="CHEBI:17754"/>
        <dbReference type="ChEBI" id="CHEBI:17855"/>
        <dbReference type="ChEBI" id="CHEBI:35759"/>
        <dbReference type="ChEBI" id="CHEBI:47777"/>
    </reaction>
    <physiologicalReaction direction="left-to-right" evidence="11">
        <dbReference type="Rhea" id="RHEA:44441"/>
    </physiologicalReaction>
</comment>
<comment type="catalytic activity">
    <reaction evidence="5">
        <text>a triacylglycerol + H2O = a 1,2-diacylglycerol + a fatty acid + H(+)</text>
        <dbReference type="Rhea" id="RHEA:35667"/>
        <dbReference type="ChEBI" id="CHEBI:15377"/>
        <dbReference type="ChEBI" id="CHEBI:15378"/>
        <dbReference type="ChEBI" id="CHEBI:17855"/>
        <dbReference type="ChEBI" id="CHEBI:28868"/>
        <dbReference type="ChEBI" id="CHEBI:49172"/>
    </reaction>
    <physiologicalReaction direction="left-to-right" evidence="12">
        <dbReference type="Rhea" id="RHEA:35668"/>
    </physiologicalReaction>
</comment>
<comment type="catalytic activity">
    <reaction evidence="5">
        <text>a triacylglycerol + H2O = a 1,3-diacylglycerol + a fatty acid + H(+)</text>
        <dbReference type="Rhea" id="RHEA:38495"/>
        <dbReference type="ChEBI" id="CHEBI:15377"/>
        <dbReference type="ChEBI" id="CHEBI:15378"/>
        <dbReference type="ChEBI" id="CHEBI:17855"/>
        <dbReference type="ChEBI" id="CHEBI:28868"/>
        <dbReference type="ChEBI" id="CHEBI:47777"/>
    </reaction>
    <physiologicalReaction direction="left-to-right" evidence="12">
        <dbReference type="Rhea" id="RHEA:38496"/>
    </physiologicalReaction>
</comment>
<comment type="catalytic activity">
    <reaction evidence="5">
        <text>a triacylglycerol + all-trans-retinol = an all-trans-retinyl ester + a diacylglycerol</text>
        <dbReference type="Rhea" id="RHEA:44676"/>
        <dbReference type="ChEBI" id="CHEBI:17336"/>
        <dbReference type="ChEBI" id="CHEBI:17855"/>
        <dbReference type="ChEBI" id="CHEBI:18035"/>
        <dbReference type="ChEBI" id="CHEBI:63410"/>
    </reaction>
    <physiologicalReaction direction="left-to-right" evidence="12">
        <dbReference type="Rhea" id="RHEA:44677"/>
    </physiologicalReaction>
</comment>
<comment type="catalytic activity">
    <reaction evidence="2">
        <text>2 1-(9Z-octadecenoyl)-glycerol = 1,2-di-(9Z-octadecenoyl)-glycerol + glycerol</text>
        <dbReference type="Rhea" id="RHEA:38323"/>
        <dbReference type="ChEBI" id="CHEBI:17754"/>
        <dbReference type="ChEBI" id="CHEBI:52323"/>
        <dbReference type="ChEBI" id="CHEBI:75342"/>
    </reaction>
    <physiologicalReaction direction="left-to-right" evidence="11">
        <dbReference type="Rhea" id="RHEA:38324"/>
    </physiologicalReaction>
</comment>
<comment type="catalytic activity">
    <reaction evidence="2">
        <text>1-(9Z-octadecenoyl)-glycerol + 1,2-di-(9Z-octadecenoyl)-glycerol = 1,2,3-tri-(9Z-octadecenoyl)-glycerol + glycerol</text>
        <dbReference type="Rhea" id="RHEA:38327"/>
        <dbReference type="ChEBI" id="CHEBI:17754"/>
        <dbReference type="ChEBI" id="CHEBI:52323"/>
        <dbReference type="ChEBI" id="CHEBI:53753"/>
        <dbReference type="ChEBI" id="CHEBI:75342"/>
    </reaction>
    <physiologicalReaction direction="left-to-right" evidence="11">
        <dbReference type="Rhea" id="RHEA:38328"/>
    </physiologicalReaction>
</comment>
<comment type="catalytic activity">
    <reaction evidence="2">
        <text>1-(9Z-octadecenoyl)-glycerol + 1,3-di-(9Z-octadecenoyl)-glycerol = 1,2,3-tri-(9Z-octadecenoyl)-glycerol + glycerol</text>
        <dbReference type="Rhea" id="RHEA:38331"/>
        <dbReference type="ChEBI" id="CHEBI:17754"/>
        <dbReference type="ChEBI" id="CHEBI:53753"/>
        <dbReference type="ChEBI" id="CHEBI:75342"/>
        <dbReference type="ChEBI" id="CHEBI:75735"/>
    </reaction>
    <physiologicalReaction direction="left-to-right" evidence="11">
        <dbReference type="Rhea" id="RHEA:38332"/>
    </physiologicalReaction>
</comment>
<comment type="catalytic activity">
    <reaction evidence="5">
        <text>1,2-di-(9Z-octadecenoyl)-glycerol + (9Z)-octadecenoate + H(+) = 1,2,3-tri-(9Z-octadecenoyl)-glycerol + H2O</text>
        <dbReference type="Rhea" id="RHEA:38379"/>
        <dbReference type="ChEBI" id="CHEBI:15377"/>
        <dbReference type="ChEBI" id="CHEBI:15378"/>
        <dbReference type="ChEBI" id="CHEBI:30823"/>
        <dbReference type="ChEBI" id="CHEBI:52323"/>
        <dbReference type="ChEBI" id="CHEBI:53753"/>
    </reaction>
    <physiologicalReaction direction="right-to-left" evidence="12">
        <dbReference type="Rhea" id="RHEA:38381"/>
    </physiologicalReaction>
</comment>
<comment type="catalytic activity">
    <reaction evidence="5">
        <text>1,2,3-tri-(9Z-octadecenoyl)-glycerol + H2O = 1,3-di-(9Z-octadecenoyl)-glycerol + (9Z)-octadecenoate + H(+)</text>
        <dbReference type="Rhea" id="RHEA:38387"/>
        <dbReference type="ChEBI" id="CHEBI:15377"/>
        <dbReference type="ChEBI" id="CHEBI:15378"/>
        <dbReference type="ChEBI" id="CHEBI:30823"/>
        <dbReference type="ChEBI" id="CHEBI:53753"/>
        <dbReference type="ChEBI" id="CHEBI:75735"/>
    </reaction>
    <physiologicalReaction direction="left-to-right" evidence="12">
        <dbReference type="Rhea" id="RHEA:38388"/>
    </physiologicalReaction>
</comment>
<comment type="catalytic activity">
    <reaction evidence="5">
        <text>all-trans-retinyl hexadecanoate + H2O = all-trans-retinol + hexadecanoate + H(+)</text>
        <dbReference type="Rhea" id="RHEA:13933"/>
        <dbReference type="ChEBI" id="CHEBI:7896"/>
        <dbReference type="ChEBI" id="CHEBI:15377"/>
        <dbReference type="ChEBI" id="CHEBI:15378"/>
        <dbReference type="ChEBI" id="CHEBI:17336"/>
        <dbReference type="ChEBI" id="CHEBI:17616"/>
    </reaction>
    <physiologicalReaction direction="left-to-right" evidence="12">
        <dbReference type="Rhea" id="RHEA:13934"/>
    </physiologicalReaction>
</comment>
<comment type="catalytic activity">
    <reaction evidence="5">
        <text>1,2,3-tri-(9Z-octadecenoyl)-glycerol + all-trans-retinol = all-trans-retinyl 9Z-octadecenoate + di-(9Z)-octadecenoylglycerol</text>
        <dbReference type="Rhea" id="RHEA:39987"/>
        <dbReference type="ChEBI" id="CHEBI:17336"/>
        <dbReference type="ChEBI" id="CHEBI:53753"/>
        <dbReference type="ChEBI" id="CHEBI:70760"/>
        <dbReference type="ChEBI" id="CHEBI:75945"/>
    </reaction>
    <physiologicalReaction direction="left-to-right" evidence="12">
        <dbReference type="Rhea" id="RHEA:39988"/>
    </physiologicalReaction>
</comment>
<comment type="activity regulation">
    <text evidence="2">The triglyceride lipase activity is inhibited by BEL ((E)-6-(bromomethylene)-3-(1-naphthalenyl)-2H-tetrahydropyran-2-one), a suicide substrate inhibitor.</text>
</comment>
<comment type="subcellular location">
    <subcellularLocation>
        <location evidence="6">Mitochondrion</location>
    </subcellularLocation>
</comment>
<comment type="alternative products">
    <event type="alternative splicing"/>
    <isoform>
        <id>P41247-1</id>
        <name>1</name>
        <sequence type="displayed"/>
    </isoform>
    <isoform>
        <id>P41247-2</id>
        <name>2</name>
        <sequence type="described" ref="VSP_043089"/>
    </isoform>
</comment>
<comment type="tissue specificity">
    <text evidence="7">Expressed in all tissues examined, including heart, brain, placenta, lung, liver, muscle, kidney, pancreas and spleen.</text>
</comment>
<comment type="disease">
    <text evidence="6">Defects in PNPLA4 may play a role in mitochondrial disorders characterized by complex IV deficiency.</text>
</comment>
<feature type="chain" id="PRO_0000058460" description="Patatin-like phospholipase domain-containing protein 4">
    <location>
        <begin position="1"/>
        <end position="253"/>
    </location>
</feature>
<feature type="domain" description="PNPLA" evidence="1">
    <location>
        <begin position="6"/>
        <end position="176"/>
    </location>
</feature>
<feature type="short sequence motif" description="GXSXG" evidence="1">
    <location>
        <begin position="41"/>
        <end position="45"/>
    </location>
</feature>
<feature type="short sequence motif" description="DGA/G" evidence="1">
    <location>
        <begin position="163"/>
        <end position="165"/>
    </location>
</feature>
<feature type="active site" description="Nucleophile" evidence="1">
    <location>
        <position position="43"/>
    </location>
</feature>
<feature type="active site" description="Proton acceptor" evidence="1">
    <location>
        <position position="163"/>
    </location>
</feature>
<feature type="splice variant" id="VSP_043089" description="In isoform 2." evidence="8">
    <location>
        <begin position="1"/>
        <end position="87"/>
    </location>
</feature>
<feature type="sequence variant" id="VAR_028068" description="In dbSNP:rs17856615." evidence="3">
    <original>V</original>
    <variation>G</variation>
    <location>
        <position position="48"/>
    </location>
</feature>
<feature type="sequence variant" id="VAR_053816" description="In dbSNP:rs2231791.">
    <original>V</original>
    <variation>I</variation>
    <location>
        <position position="113"/>
    </location>
</feature>
<feature type="sequence variant" id="VAR_028069" description="In dbSNP:rs17851825." evidence="3">
    <original>D</original>
    <variation>G</variation>
    <location>
        <position position="134"/>
    </location>
</feature>
<feature type="sequence variant" id="VAR_028070" description="In dbSNP:rs2231793.">
    <original>R</original>
    <variation>Q</variation>
    <location>
        <position position="187"/>
    </location>
</feature>
<keyword id="KW-0025">Alternative splicing</keyword>
<keyword id="KW-0378">Hydrolase</keyword>
<keyword id="KW-0442">Lipid degradation</keyword>
<keyword id="KW-0443">Lipid metabolism</keyword>
<keyword id="KW-0496">Mitochondrion</keyword>
<keyword id="KW-1274">Primary mitochondrial disease</keyword>
<keyword id="KW-1267">Proteomics identification</keyword>
<keyword id="KW-1185">Reference proteome</keyword>
<accession>P41247</accession>
<accession>A8K1H3</accession>
<accession>B4E362</accession>
<accession>Q8WW83</accession>
<sequence>MKHINLSFAACGFLGIYHLGAASALCRHGKKLVKDVKAFAGASAGSLVASVLLTAPEKIEECNQFTYKFAEEIRRQSFGAVTPGYDFMARLRSGMESILPPSAHELAQNRLHVSITNAKTRENHLVSTFSSREDLIKVLLASSFVPIYAGLKLVEYKGQKWVDGGLTNALPILPVGRTVTISPFSGRLDISPQDKGQLDLYVNIAKQDIMLSLANLVRLNQALFPPSKRKMESLYQCGFDDTVKFLLKENWFE</sequence>